<proteinExistence type="inferred from homology"/>
<gene>
    <name evidence="1" type="primary">hypA</name>
    <name type="ordered locus">Fphi_0849</name>
</gene>
<protein>
    <recommendedName>
        <fullName evidence="1">Hydrogenase maturation factor HypA</fullName>
    </recommendedName>
</protein>
<reference key="1">
    <citation type="submission" date="2007-12" db="EMBL/GenBank/DDBJ databases">
        <title>Complete sequence of chromosome of Francisella philomiragia subsp. philomiragia ATCC 25017.</title>
        <authorList>
            <consortium name="US DOE Joint Genome Institute"/>
            <person name="Copeland A."/>
            <person name="Lucas S."/>
            <person name="Lapidus A."/>
            <person name="Barry K."/>
            <person name="Detter J.C."/>
            <person name="Glavina del Rio T."/>
            <person name="Hammon N."/>
            <person name="Israni S."/>
            <person name="Dalin E."/>
            <person name="Tice H."/>
            <person name="Pitluck S."/>
            <person name="Chain P."/>
            <person name="Malfatti S."/>
            <person name="Shin M."/>
            <person name="Vergez L."/>
            <person name="Schmutz J."/>
            <person name="Larimer F."/>
            <person name="Land M."/>
            <person name="Hauser L."/>
            <person name="Richardson P."/>
        </authorList>
    </citation>
    <scope>NUCLEOTIDE SEQUENCE [LARGE SCALE GENOMIC DNA]</scope>
    <source>
        <strain>ATCC 25017 / CCUG 19701 / FSC 153 / O#319-036</strain>
    </source>
</reference>
<sequence>MHEFSLCQSVISIAKKAAENNSKKVSKIVVKIGNLAGVDIESFEFWFPVAAKDSVLEQAKLEIIHEQAIAKCKACEHEFELTRLYEQCPNCGSFEKDILKGKDMLVESIVFN</sequence>
<comment type="function">
    <text evidence="1">Involved in the maturation of [NiFe] hydrogenases. Required for nickel insertion into the metal center of the hydrogenase.</text>
</comment>
<comment type="similarity">
    <text evidence="1">Belongs to the HypA/HybF family.</text>
</comment>
<accession>B0TWG4</accession>
<organism>
    <name type="scientific">Francisella philomiragia subsp. philomiragia (strain ATCC 25017 / CCUG 19701 / FSC 153 / O#319-036)</name>
    <dbReference type="NCBI Taxonomy" id="484022"/>
    <lineage>
        <taxon>Bacteria</taxon>
        <taxon>Pseudomonadati</taxon>
        <taxon>Pseudomonadota</taxon>
        <taxon>Gammaproteobacteria</taxon>
        <taxon>Thiotrichales</taxon>
        <taxon>Francisellaceae</taxon>
        <taxon>Francisella</taxon>
    </lineage>
</organism>
<keyword id="KW-0479">Metal-binding</keyword>
<keyword id="KW-0533">Nickel</keyword>
<keyword id="KW-0862">Zinc</keyword>
<dbReference type="EMBL" id="CP000937">
    <property type="protein sequence ID" value="ABZ87072.1"/>
    <property type="molecule type" value="Genomic_DNA"/>
</dbReference>
<dbReference type="SMR" id="B0TWG4"/>
<dbReference type="KEGG" id="fph:Fphi_0849"/>
<dbReference type="eggNOG" id="COG0375">
    <property type="taxonomic scope" value="Bacteria"/>
</dbReference>
<dbReference type="HOGENOM" id="CLU_126929_4_1_6"/>
<dbReference type="GO" id="GO:0016151">
    <property type="term" value="F:nickel cation binding"/>
    <property type="evidence" value="ECO:0007669"/>
    <property type="project" value="UniProtKB-UniRule"/>
</dbReference>
<dbReference type="GO" id="GO:0008270">
    <property type="term" value="F:zinc ion binding"/>
    <property type="evidence" value="ECO:0007669"/>
    <property type="project" value="UniProtKB-UniRule"/>
</dbReference>
<dbReference type="GO" id="GO:0051604">
    <property type="term" value="P:protein maturation"/>
    <property type="evidence" value="ECO:0007669"/>
    <property type="project" value="InterPro"/>
</dbReference>
<dbReference type="GO" id="GO:0036211">
    <property type="term" value="P:protein modification process"/>
    <property type="evidence" value="ECO:0007669"/>
    <property type="project" value="UniProtKB-UniRule"/>
</dbReference>
<dbReference type="Gene3D" id="3.30.2320.80">
    <property type="match status" value="1"/>
</dbReference>
<dbReference type="HAMAP" id="MF_00213">
    <property type="entry name" value="HypA_HybF"/>
    <property type="match status" value="1"/>
</dbReference>
<dbReference type="InterPro" id="IPR000688">
    <property type="entry name" value="HypA/HybF"/>
</dbReference>
<dbReference type="NCBIfam" id="TIGR00100">
    <property type="entry name" value="hypA"/>
    <property type="match status" value="1"/>
</dbReference>
<dbReference type="PANTHER" id="PTHR34535">
    <property type="entry name" value="HYDROGENASE MATURATION FACTOR HYPA"/>
    <property type="match status" value="1"/>
</dbReference>
<dbReference type="PANTHER" id="PTHR34535:SF3">
    <property type="entry name" value="HYDROGENASE MATURATION FACTOR HYPA"/>
    <property type="match status" value="1"/>
</dbReference>
<dbReference type="Pfam" id="PF01155">
    <property type="entry name" value="HypA"/>
    <property type="match status" value="1"/>
</dbReference>
<dbReference type="PIRSF" id="PIRSF004761">
    <property type="entry name" value="Hydrgn_mat_HypA"/>
    <property type="match status" value="1"/>
</dbReference>
<feature type="chain" id="PRO_1000078038" description="Hydrogenase maturation factor HypA">
    <location>
        <begin position="1"/>
        <end position="112"/>
    </location>
</feature>
<feature type="binding site" evidence="1">
    <location>
        <position position="2"/>
    </location>
    <ligand>
        <name>Ni(2+)</name>
        <dbReference type="ChEBI" id="CHEBI:49786"/>
    </ligand>
</feature>
<feature type="binding site" evidence="1">
    <location>
        <position position="72"/>
    </location>
    <ligand>
        <name>Zn(2+)</name>
        <dbReference type="ChEBI" id="CHEBI:29105"/>
    </ligand>
</feature>
<feature type="binding site" evidence="1">
    <location>
        <position position="75"/>
    </location>
    <ligand>
        <name>Zn(2+)</name>
        <dbReference type="ChEBI" id="CHEBI:29105"/>
    </ligand>
</feature>
<feature type="binding site" evidence="1">
    <location>
        <position position="88"/>
    </location>
    <ligand>
        <name>Zn(2+)</name>
        <dbReference type="ChEBI" id="CHEBI:29105"/>
    </ligand>
</feature>
<feature type="binding site" evidence="1">
    <location>
        <position position="91"/>
    </location>
    <ligand>
        <name>Zn(2+)</name>
        <dbReference type="ChEBI" id="CHEBI:29105"/>
    </ligand>
</feature>
<name>HYPA_FRAP2</name>
<evidence type="ECO:0000255" key="1">
    <source>
        <dbReference type="HAMAP-Rule" id="MF_00213"/>
    </source>
</evidence>